<protein>
    <recommendedName>
        <fullName evidence="5">Kinesin-like protein KIN-7C</fullName>
    </recommendedName>
</protein>
<name>KN7C_ORYSJ</name>
<feature type="chain" id="PRO_0000436624" description="Kinesin-like protein KIN-7C">
    <location>
        <begin position="1"/>
        <end position="884"/>
    </location>
</feature>
<feature type="domain" description="Kinesin motor" evidence="2">
    <location>
        <begin position="33"/>
        <end position="355"/>
    </location>
</feature>
<feature type="region of interest" description="Disordered" evidence="3">
    <location>
        <begin position="434"/>
        <end position="530"/>
    </location>
</feature>
<feature type="coiled-coil region" evidence="1">
    <location>
        <begin position="364"/>
        <end position="435"/>
    </location>
</feature>
<feature type="compositionally biased region" description="Low complexity" evidence="3">
    <location>
        <begin position="449"/>
        <end position="460"/>
    </location>
</feature>
<feature type="compositionally biased region" description="Basic and acidic residues" evidence="3">
    <location>
        <begin position="461"/>
        <end position="483"/>
    </location>
</feature>
<feature type="compositionally biased region" description="Polar residues" evidence="3">
    <location>
        <begin position="498"/>
        <end position="523"/>
    </location>
</feature>
<feature type="binding site" evidence="2">
    <location>
        <begin position="119"/>
        <end position="126"/>
    </location>
    <ligand>
        <name>ATP</name>
        <dbReference type="ChEBI" id="CHEBI:30616"/>
    </ligand>
</feature>
<proteinExistence type="evidence at transcript level"/>
<sequence length="884" mass="98435">MGAIGGDELVQWDKMGAAEAVNGGCGGAGKMDRIQVLVRLRPLSEKEVARREPAEWECINDSTVMFRSTFPDRPTAPTAYTFDRVFHSDCSTKEVYEEGVKEVALSVVSGINSSIFAYGQTSSGKTYTMTGVTEYTVADIYDYINKHEERAFVLKFSAIEIYNEVIRDLLSAENTPLRLWDDAEKGTYVENLTEVVLRDWNHLKGLISVCEAQRRTGETFLNEKSSRSHQILRLTVESSAREFLGKDKSTTLVASANFVDLAGSERASQALSAGTRLKEGCHINRSLLALGTVIRKLSMGSNAHIPYRDSKLTRILQPSLGGNARTAIICTLSPATSHIEQSRNTLLFGSCAKEVVTNAQVNVVMSDKALVKHLQKELARLESELRHPVQSSSLETLLKEKDNQIRKMEKEIKELKSQRDLAQSRLQDLLQSVGDHDLNRQVQGKHSVRSPPSVGMPPSVSRDDSSQVSHDDSDLYKEVRCIESNRTGGNDQLDLSAGESSSPQDSNMNSGLHGNDSNASVNSRHSRPSGEAPITLEEHLENIRRPFVSLAKDLGSSTRNSSNLRVIGRSRSCRSLTGSTMFDDMEMDDCTPLNRSLVEFPGRPVESHRRGSALHYDAETDTLSRAGSMSSEISTFKDAKTNGSVACDTEFTGIGEFVAELKEMAQVHYQKQLGDQNANGKSIGLDPIEGVSQSPSRWPLEFEKKQQEIIELWQACSISLVHRTYFFLLFKGEAADSIYMEVELRRLSFLRDTYSRGSTPSNAIVGSLSTSPVASAKKLQREREMLARQMQKRLSTEEREHTYTKWGVSLDSKRRKLQVARRLWTETKDLEHVRESASLVAKLIGLQEPGQVLKEMFGLSFAPQQQPTRRRSSNGWRYGIPSFA</sequence>
<gene>
    <name evidence="5" type="primary">KIN7C</name>
    <name evidence="7" type="ordered locus">Os02g0645100</name>
    <name evidence="5" type="ordered locus">LOC_Os02g43130</name>
    <name evidence="8" type="ORF">OsJ_07710</name>
    <name evidence="6" type="ORF">P0030D07.15</name>
</gene>
<evidence type="ECO:0000255" key="1"/>
<evidence type="ECO:0000255" key="2">
    <source>
        <dbReference type="PROSITE-ProRule" id="PRU00283"/>
    </source>
</evidence>
<evidence type="ECO:0000256" key="3">
    <source>
        <dbReference type="SAM" id="MobiDB-lite"/>
    </source>
</evidence>
<evidence type="ECO:0000303" key="4">
    <source>
    </source>
</evidence>
<evidence type="ECO:0000305" key="5"/>
<evidence type="ECO:0000312" key="6">
    <source>
        <dbReference type="EMBL" id="BAD25811.1"/>
    </source>
</evidence>
<evidence type="ECO:0000312" key="7">
    <source>
        <dbReference type="EMBL" id="BAF09485.1"/>
    </source>
</evidence>
<evidence type="ECO:0000312" key="8">
    <source>
        <dbReference type="EMBL" id="EEE57470.1"/>
    </source>
</evidence>
<keyword id="KW-0067">ATP-binding</keyword>
<keyword id="KW-0175">Coiled coil</keyword>
<keyword id="KW-0493">Microtubule</keyword>
<keyword id="KW-0505">Motor protein</keyword>
<keyword id="KW-0547">Nucleotide-binding</keyword>
<keyword id="KW-1185">Reference proteome</keyword>
<comment type="similarity">
    <text evidence="4">Belongs to the TRAFAC class myosin-kinesin ATPase superfamily. Kinesin family. KIN-7 subfamily.</text>
</comment>
<comment type="sequence caution" evidence="5">
    <conflict type="erroneous gene model prediction">
        <sequence resource="EMBL-CDS" id="EEE57470"/>
    </conflict>
</comment>
<dbReference type="EMBL" id="AP005306">
    <property type="protein sequence ID" value="BAD25811.1"/>
    <property type="molecule type" value="Genomic_DNA"/>
</dbReference>
<dbReference type="EMBL" id="AP008208">
    <property type="protein sequence ID" value="BAF09485.1"/>
    <property type="molecule type" value="Genomic_DNA"/>
</dbReference>
<dbReference type="EMBL" id="AP014958">
    <property type="protein sequence ID" value="BAS80021.1"/>
    <property type="molecule type" value="Genomic_DNA"/>
</dbReference>
<dbReference type="EMBL" id="CM000139">
    <property type="protein sequence ID" value="EEE57470.1"/>
    <property type="status" value="ALT_SEQ"/>
    <property type="molecule type" value="Genomic_DNA"/>
</dbReference>
<dbReference type="EMBL" id="AK100979">
    <property type="protein sequence ID" value="BAG94862.1"/>
    <property type="molecule type" value="mRNA"/>
</dbReference>
<dbReference type="EMBL" id="AK242767">
    <property type="protein sequence ID" value="BAH01337.1"/>
    <property type="molecule type" value="mRNA"/>
</dbReference>
<dbReference type="RefSeq" id="XP_015627044.1">
    <property type="nucleotide sequence ID" value="XM_015771558.1"/>
</dbReference>
<dbReference type="SMR" id="Q6H638"/>
<dbReference type="FunCoup" id="Q6H638">
    <property type="interactions" value="10"/>
</dbReference>
<dbReference type="STRING" id="39947.Q6H638"/>
<dbReference type="PaxDb" id="39947-Q6H638"/>
<dbReference type="EnsemblPlants" id="Os02t0645100-01">
    <property type="protein sequence ID" value="Os02t0645100-01"/>
    <property type="gene ID" value="Os02g0645100"/>
</dbReference>
<dbReference type="Gramene" id="Os02t0645100-01">
    <property type="protein sequence ID" value="Os02t0645100-01"/>
    <property type="gene ID" value="Os02g0645100"/>
</dbReference>
<dbReference type="KEGG" id="dosa:Os02g0645100"/>
<dbReference type="eggNOG" id="KOG0242">
    <property type="taxonomic scope" value="Eukaryota"/>
</dbReference>
<dbReference type="HOGENOM" id="CLU_013407_1_0_1"/>
<dbReference type="InParanoid" id="Q6H638"/>
<dbReference type="OMA" id="WETCYIS"/>
<dbReference type="OrthoDB" id="3176171at2759"/>
<dbReference type="Proteomes" id="UP000000763">
    <property type="component" value="Chromosome 2"/>
</dbReference>
<dbReference type="Proteomes" id="UP000007752">
    <property type="component" value="Chromosome 2"/>
</dbReference>
<dbReference type="Proteomes" id="UP000059680">
    <property type="component" value="Chromosome 2"/>
</dbReference>
<dbReference type="GO" id="GO:0005874">
    <property type="term" value="C:microtubule"/>
    <property type="evidence" value="ECO:0007669"/>
    <property type="project" value="UniProtKB-KW"/>
</dbReference>
<dbReference type="GO" id="GO:0005524">
    <property type="term" value="F:ATP binding"/>
    <property type="evidence" value="ECO:0007669"/>
    <property type="project" value="UniProtKB-KW"/>
</dbReference>
<dbReference type="GO" id="GO:0008017">
    <property type="term" value="F:microtubule binding"/>
    <property type="evidence" value="ECO:0007669"/>
    <property type="project" value="InterPro"/>
</dbReference>
<dbReference type="GO" id="GO:0003777">
    <property type="term" value="F:microtubule motor activity"/>
    <property type="evidence" value="ECO:0007669"/>
    <property type="project" value="InterPro"/>
</dbReference>
<dbReference type="GO" id="GO:0007018">
    <property type="term" value="P:microtubule-based movement"/>
    <property type="evidence" value="ECO:0007669"/>
    <property type="project" value="InterPro"/>
</dbReference>
<dbReference type="CDD" id="cd01374">
    <property type="entry name" value="KISc_CENP_E"/>
    <property type="match status" value="1"/>
</dbReference>
<dbReference type="FunFam" id="3.40.850.10:FF:000016">
    <property type="entry name" value="Kinesin-like protein"/>
    <property type="match status" value="1"/>
</dbReference>
<dbReference type="Gene3D" id="3.40.850.10">
    <property type="entry name" value="Kinesin motor domain"/>
    <property type="match status" value="1"/>
</dbReference>
<dbReference type="InterPro" id="IPR027640">
    <property type="entry name" value="Kinesin-like_fam"/>
</dbReference>
<dbReference type="InterPro" id="IPR001752">
    <property type="entry name" value="Kinesin_motor_dom"/>
</dbReference>
<dbReference type="InterPro" id="IPR036961">
    <property type="entry name" value="Kinesin_motor_dom_sf"/>
</dbReference>
<dbReference type="InterPro" id="IPR021881">
    <property type="entry name" value="NACK_C"/>
</dbReference>
<dbReference type="InterPro" id="IPR027417">
    <property type="entry name" value="P-loop_NTPase"/>
</dbReference>
<dbReference type="PANTHER" id="PTHR47968">
    <property type="entry name" value="CENTROMERE PROTEIN E"/>
    <property type="match status" value="1"/>
</dbReference>
<dbReference type="PANTHER" id="PTHR47968:SF28">
    <property type="entry name" value="KINESIN-LIKE PROTEIN KIN-7C"/>
    <property type="match status" value="1"/>
</dbReference>
<dbReference type="Pfam" id="PF11995">
    <property type="entry name" value="DUF3490"/>
    <property type="match status" value="1"/>
</dbReference>
<dbReference type="Pfam" id="PF00225">
    <property type="entry name" value="Kinesin"/>
    <property type="match status" value="1"/>
</dbReference>
<dbReference type="PRINTS" id="PR00380">
    <property type="entry name" value="KINESINHEAVY"/>
</dbReference>
<dbReference type="SMART" id="SM00129">
    <property type="entry name" value="KISc"/>
    <property type="match status" value="1"/>
</dbReference>
<dbReference type="SUPFAM" id="SSF52540">
    <property type="entry name" value="P-loop containing nucleoside triphosphate hydrolases"/>
    <property type="match status" value="1"/>
</dbReference>
<dbReference type="PROSITE" id="PS50067">
    <property type="entry name" value="KINESIN_MOTOR_2"/>
    <property type="match status" value="1"/>
</dbReference>
<accession>Q6H638</accession>
<accession>B9F1C8</accession>
<reference key="1">
    <citation type="journal article" date="2005" name="Nature">
        <title>The map-based sequence of the rice genome.</title>
        <authorList>
            <consortium name="International rice genome sequencing project (IRGSP)"/>
        </authorList>
    </citation>
    <scope>NUCLEOTIDE SEQUENCE [LARGE SCALE GENOMIC DNA]</scope>
    <source>
        <strain>cv. Nipponbare</strain>
    </source>
</reference>
<reference key="2">
    <citation type="journal article" date="2008" name="Nucleic Acids Res.">
        <title>The rice annotation project database (RAP-DB): 2008 update.</title>
        <authorList>
            <consortium name="The rice annotation project (RAP)"/>
        </authorList>
    </citation>
    <scope>GENOME REANNOTATION</scope>
    <source>
        <strain>cv. Nipponbare</strain>
    </source>
</reference>
<reference key="3">
    <citation type="journal article" date="2013" name="Rice">
        <title>Improvement of the Oryza sativa Nipponbare reference genome using next generation sequence and optical map data.</title>
        <authorList>
            <person name="Kawahara Y."/>
            <person name="de la Bastide M."/>
            <person name="Hamilton J.P."/>
            <person name="Kanamori H."/>
            <person name="McCombie W.R."/>
            <person name="Ouyang S."/>
            <person name="Schwartz D.C."/>
            <person name="Tanaka T."/>
            <person name="Wu J."/>
            <person name="Zhou S."/>
            <person name="Childs K.L."/>
            <person name="Davidson R.M."/>
            <person name="Lin H."/>
            <person name="Quesada-Ocampo L."/>
            <person name="Vaillancourt B."/>
            <person name="Sakai H."/>
            <person name="Lee S.S."/>
            <person name="Kim J."/>
            <person name="Numa H."/>
            <person name="Itoh T."/>
            <person name="Buell C.R."/>
            <person name="Matsumoto T."/>
        </authorList>
    </citation>
    <scope>GENOME REANNOTATION</scope>
    <source>
        <strain>cv. Nipponbare</strain>
    </source>
</reference>
<reference key="4">
    <citation type="journal article" date="2005" name="PLoS Biol.">
        <title>The genomes of Oryza sativa: a history of duplications.</title>
        <authorList>
            <person name="Yu J."/>
            <person name="Wang J."/>
            <person name="Lin W."/>
            <person name="Li S."/>
            <person name="Li H."/>
            <person name="Zhou J."/>
            <person name="Ni P."/>
            <person name="Dong W."/>
            <person name="Hu S."/>
            <person name="Zeng C."/>
            <person name="Zhang J."/>
            <person name="Zhang Y."/>
            <person name="Li R."/>
            <person name="Xu Z."/>
            <person name="Li S."/>
            <person name="Li X."/>
            <person name="Zheng H."/>
            <person name="Cong L."/>
            <person name="Lin L."/>
            <person name="Yin J."/>
            <person name="Geng J."/>
            <person name="Li G."/>
            <person name="Shi J."/>
            <person name="Liu J."/>
            <person name="Lv H."/>
            <person name="Li J."/>
            <person name="Wang J."/>
            <person name="Deng Y."/>
            <person name="Ran L."/>
            <person name="Shi X."/>
            <person name="Wang X."/>
            <person name="Wu Q."/>
            <person name="Li C."/>
            <person name="Ren X."/>
            <person name="Wang J."/>
            <person name="Wang X."/>
            <person name="Li D."/>
            <person name="Liu D."/>
            <person name="Zhang X."/>
            <person name="Ji Z."/>
            <person name="Zhao W."/>
            <person name="Sun Y."/>
            <person name="Zhang Z."/>
            <person name="Bao J."/>
            <person name="Han Y."/>
            <person name="Dong L."/>
            <person name="Ji J."/>
            <person name="Chen P."/>
            <person name="Wu S."/>
            <person name="Liu J."/>
            <person name="Xiao Y."/>
            <person name="Bu D."/>
            <person name="Tan J."/>
            <person name="Yang L."/>
            <person name="Ye C."/>
            <person name="Zhang J."/>
            <person name="Xu J."/>
            <person name="Zhou Y."/>
            <person name="Yu Y."/>
            <person name="Zhang B."/>
            <person name="Zhuang S."/>
            <person name="Wei H."/>
            <person name="Liu B."/>
            <person name="Lei M."/>
            <person name="Yu H."/>
            <person name="Li Y."/>
            <person name="Xu H."/>
            <person name="Wei S."/>
            <person name="He X."/>
            <person name="Fang L."/>
            <person name="Zhang Z."/>
            <person name="Zhang Y."/>
            <person name="Huang X."/>
            <person name="Su Z."/>
            <person name="Tong W."/>
            <person name="Li J."/>
            <person name="Tong Z."/>
            <person name="Li S."/>
            <person name="Ye J."/>
            <person name="Wang L."/>
            <person name="Fang L."/>
            <person name="Lei T."/>
            <person name="Chen C.-S."/>
            <person name="Chen H.-C."/>
            <person name="Xu Z."/>
            <person name="Li H."/>
            <person name="Huang H."/>
            <person name="Zhang F."/>
            <person name="Xu H."/>
            <person name="Li N."/>
            <person name="Zhao C."/>
            <person name="Li S."/>
            <person name="Dong L."/>
            <person name="Huang Y."/>
            <person name="Li L."/>
            <person name="Xi Y."/>
            <person name="Qi Q."/>
            <person name="Li W."/>
            <person name="Zhang B."/>
            <person name="Hu W."/>
            <person name="Zhang Y."/>
            <person name="Tian X."/>
            <person name="Jiao Y."/>
            <person name="Liang X."/>
            <person name="Jin J."/>
            <person name="Gao L."/>
            <person name="Zheng W."/>
            <person name="Hao B."/>
            <person name="Liu S.-M."/>
            <person name="Wang W."/>
            <person name="Yuan L."/>
            <person name="Cao M."/>
            <person name="McDermott J."/>
            <person name="Samudrala R."/>
            <person name="Wang J."/>
            <person name="Wong G.K.-S."/>
            <person name="Yang H."/>
        </authorList>
    </citation>
    <scope>NUCLEOTIDE SEQUENCE [LARGE SCALE GENOMIC DNA]</scope>
    <source>
        <strain>cv. Nipponbare</strain>
    </source>
</reference>
<reference key="5">
    <citation type="journal article" date="2003" name="Science">
        <title>Collection, mapping, and annotation of over 28,000 cDNA clones from japonica rice.</title>
        <authorList>
            <consortium name="The rice full-length cDNA consortium"/>
        </authorList>
    </citation>
    <scope>NUCLEOTIDE SEQUENCE [LARGE SCALE MRNA]</scope>
    <source>
        <strain>cv. Nipponbare</strain>
    </source>
</reference>
<reference key="6">
    <citation type="submission" date="2006-10" db="EMBL/GenBank/DDBJ databases">
        <title>Oryza sativa full length cDNA.</title>
        <authorList>
            <consortium name="The rice full-length cDNA consortium"/>
        </authorList>
    </citation>
    <scope>NUCLEOTIDE SEQUENCE [LARGE SCALE MRNA]</scope>
    <source>
        <strain>cv. Nipponbare</strain>
    </source>
</reference>
<reference key="7">
    <citation type="journal article" date="2009" name="Ann. Bot.">
        <title>Evaluating the microtubule cytoskeleton and its interacting proteins in monocots by mining the rice genome.</title>
        <authorList>
            <person name="Guo L."/>
            <person name="Ho C.M."/>
            <person name="Kong Z."/>
            <person name="Lee Y.R."/>
            <person name="Qian Q."/>
            <person name="Liu B."/>
        </authorList>
    </citation>
    <scope>GENE FAMILY</scope>
    <scope>NOMENCLATURE</scope>
</reference>
<organism>
    <name type="scientific">Oryza sativa subsp. japonica</name>
    <name type="common">Rice</name>
    <dbReference type="NCBI Taxonomy" id="39947"/>
    <lineage>
        <taxon>Eukaryota</taxon>
        <taxon>Viridiplantae</taxon>
        <taxon>Streptophyta</taxon>
        <taxon>Embryophyta</taxon>
        <taxon>Tracheophyta</taxon>
        <taxon>Spermatophyta</taxon>
        <taxon>Magnoliopsida</taxon>
        <taxon>Liliopsida</taxon>
        <taxon>Poales</taxon>
        <taxon>Poaceae</taxon>
        <taxon>BOP clade</taxon>
        <taxon>Oryzoideae</taxon>
        <taxon>Oryzeae</taxon>
        <taxon>Oryzinae</taxon>
        <taxon>Oryza</taxon>
        <taxon>Oryza sativa</taxon>
    </lineage>
</organism>